<proteinExistence type="inferred from homology"/>
<sequence>MAGTKPSDLGSLKVGQYVVIDGVACRVMDTTHSKPGKHGGAKVRLVAMGIFESVKKEHVGPASSRIDVPLIDKRKGQVLALMGENVQIMDMETYETLELPMPEDVEGIDSGVEVEYFEAMDRYKITRVISK</sequence>
<organism>
    <name type="scientific">Methanococcus maripaludis (strain C5 / ATCC BAA-1333)</name>
    <dbReference type="NCBI Taxonomy" id="402880"/>
    <lineage>
        <taxon>Archaea</taxon>
        <taxon>Methanobacteriati</taxon>
        <taxon>Methanobacteriota</taxon>
        <taxon>Methanomada group</taxon>
        <taxon>Methanococci</taxon>
        <taxon>Methanococcales</taxon>
        <taxon>Methanococcaceae</taxon>
        <taxon>Methanococcus</taxon>
    </lineage>
</organism>
<feature type="chain" id="PRO_1000007910" description="Translation initiation factor 5A">
    <location>
        <begin position="1"/>
        <end position="131"/>
    </location>
</feature>
<feature type="modified residue" description="Hypusine" evidence="1">
    <location>
        <position position="37"/>
    </location>
</feature>
<protein>
    <recommendedName>
        <fullName evidence="1">Translation initiation factor 5A</fullName>
    </recommendedName>
    <alternativeName>
        <fullName evidence="1">Hypusine-containing protein</fullName>
    </alternativeName>
    <alternativeName>
        <fullName evidence="1">eIF-5A</fullName>
    </alternativeName>
</protein>
<keyword id="KW-0963">Cytoplasm</keyword>
<keyword id="KW-0385">Hypusine</keyword>
<keyword id="KW-0396">Initiation factor</keyword>
<keyword id="KW-0648">Protein biosynthesis</keyword>
<dbReference type="EMBL" id="CP000609">
    <property type="protein sequence ID" value="ABO35069.1"/>
    <property type="molecule type" value="Genomic_DNA"/>
</dbReference>
<dbReference type="RefSeq" id="WP_011868523.1">
    <property type="nucleotide sequence ID" value="NC_009135.1"/>
</dbReference>
<dbReference type="SMR" id="A4FXY5"/>
<dbReference type="STRING" id="402880.MmarC5_0759"/>
<dbReference type="GeneID" id="4928402"/>
<dbReference type="KEGG" id="mmq:MmarC5_0759"/>
<dbReference type="eggNOG" id="arCOG04277">
    <property type="taxonomic scope" value="Archaea"/>
</dbReference>
<dbReference type="HOGENOM" id="CLU_102600_3_0_2"/>
<dbReference type="OrthoDB" id="23689at2157"/>
<dbReference type="Proteomes" id="UP000000253">
    <property type="component" value="Chromosome"/>
</dbReference>
<dbReference type="GO" id="GO:0005737">
    <property type="term" value="C:cytoplasm"/>
    <property type="evidence" value="ECO:0007669"/>
    <property type="project" value="UniProtKB-SubCell"/>
</dbReference>
<dbReference type="GO" id="GO:0043022">
    <property type="term" value="F:ribosome binding"/>
    <property type="evidence" value="ECO:0007669"/>
    <property type="project" value="InterPro"/>
</dbReference>
<dbReference type="GO" id="GO:0003723">
    <property type="term" value="F:RNA binding"/>
    <property type="evidence" value="ECO:0007669"/>
    <property type="project" value="InterPro"/>
</dbReference>
<dbReference type="GO" id="GO:0003746">
    <property type="term" value="F:translation elongation factor activity"/>
    <property type="evidence" value="ECO:0007669"/>
    <property type="project" value="InterPro"/>
</dbReference>
<dbReference type="GO" id="GO:0003743">
    <property type="term" value="F:translation initiation factor activity"/>
    <property type="evidence" value="ECO:0007669"/>
    <property type="project" value="UniProtKB-UniRule"/>
</dbReference>
<dbReference type="GO" id="GO:0045901">
    <property type="term" value="P:positive regulation of translational elongation"/>
    <property type="evidence" value="ECO:0007669"/>
    <property type="project" value="InterPro"/>
</dbReference>
<dbReference type="GO" id="GO:0045905">
    <property type="term" value="P:positive regulation of translational termination"/>
    <property type="evidence" value="ECO:0007669"/>
    <property type="project" value="InterPro"/>
</dbReference>
<dbReference type="CDD" id="cd04467">
    <property type="entry name" value="S1_aIF5A"/>
    <property type="match status" value="1"/>
</dbReference>
<dbReference type="Gene3D" id="2.30.30.30">
    <property type="match status" value="1"/>
</dbReference>
<dbReference type="Gene3D" id="2.40.50.140">
    <property type="entry name" value="Nucleic acid-binding proteins"/>
    <property type="match status" value="1"/>
</dbReference>
<dbReference type="HAMAP" id="MF_00085">
    <property type="entry name" value="eIF_5A"/>
    <property type="match status" value="1"/>
</dbReference>
<dbReference type="InterPro" id="IPR001884">
    <property type="entry name" value="IF5A-like"/>
</dbReference>
<dbReference type="InterPro" id="IPR048670">
    <property type="entry name" value="IF5A-like_N"/>
</dbReference>
<dbReference type="InterPro" id="IPR012340">
    <property type="entry name" value="NA-bd_OB-fold"/>
</dbReference>
<dbReference type="InterPro" id="IPR014722">
    <property type="entry name" value="Rib_uL2_dom2"/>
</dbReference>
<dbReference type="InterPro" id="IPR019769">
    <property type="entry name" value="Trans_elong_IF5A_hypusine_site"/>
</dbReference>
<dbReference type="InterPro" id="IPR022847">
    <property type="entry name" value="Transl_elong_IF5A_arc"/>
</dbReference>
<dbReference type="InterPro" id="IPR020189">
    <property type="entry name" value="Transl_elong_IF5A_C"/>
</dbReference>
<dbReference type="InterPro" id="IPR008991">
    <property type="entry name" value="Translation_prot_SH3-like_sf"/>
</dbReference>
<dbReference type="NCBIfam" id="TIGR00037">
    <property type="entry name" value="eIF_5A"/>
    <property type="match status" value="1"/>
</dbReference>
<dbReference type="NCBIfam" id="NF003076">
    <property type="entry name" value="PRK03999.1"/>
    <property type="match status" value="1"/>
</dbReference>
<dbReference type="PANTHER" id="PTHR11673">
    <property type="entry name" value="TRANSLATION INITIATION FACTOR 5A FAMILY MEMBER"/>
    <property type="match status" value="1"/>
</dbReference>
<dbReference type="Pfam" id="PF21485">
    <property type="entry name" value="IF5A-like_N"/>
    <property type="match status" value="1"/>
</dbReference>
<dbReference type="PIRSF" id="PIRSF003025">
    <property type="entry name" value="eIF5A"/>
    <property type="match status" value="1"/>
</dbReference>
<dbReference type="SMART" id="SM01376">
    <property type="entry name" value="eIF-5a"/>
    <property type="match status" value="1"/>
</dbReference>
<dbReference type="SUPFAM" id="SSF50249">
    <property type="entry name" value="Nucleic acid-binding proteins"/>
    <property type="match status" value="1"/>
</dbReference>
<dbReference type="SUPFAM" id="SSF50104">
    <property type="entry name" value="Translation proteins SH3-like domain"/>
    <property type="match status" value="1"/>
</dbReference>
<dbReference type="PROSITE" id="PS00302">
    <property type="entry name" value="IF5A_HYPUSINE"/>
    <property type="match status" value="1"/>
</dbReference>
<name>IF5A_METM5</name>
<reference key="1">
    <citation type="submission" date="2007-03" db="EMBL/GenBank/DDBJ databases">
        <title>Complete sequence of chromosome of Methanococcus maripaludis C5.</title>
        <authorList>
            <consortium name="US DOE Joint Genome Institute"/>
            <person name="Copeland A."/>
            <person name="Lucas S."/>
            <person name="Lapidus A."/>
            <person name="Barry K."/>
            <person name="Glavina del Rio T."/>
            <person name="Dalin E."/>
            <person name="Tice H."/>
            <person name="Pitluck S."/>
            <person name="Chertkov O."/>
            <person name="Brettin T."/>
            <person name="Bruce D."/>
            <person name="Han C."/>
            <person name="Detter J.C."/>
            <person name="Schmutz J."/>
            <person name="Larimer F."/>
            <person name="Land M."/>
            <person name="Hauser L."/>
            <person name="Kyrpides N."/>
            <person name="Mikhailova N."/>
            <person name="Sieprawska-Lupa M."/>
            <person name="Whitman W.B."/>
            <person name="Richardson P."/>
        </authorList>
    </citation>
    <scope>NUCLEOTIDE SEQUENCE [LARGE SCALE GENOMIC DNA]</scope>
    <source>
        <strain>C5 / ATCC BAA-1333</strain>
    </source>
</reference>
<comment type="function">
    <text evidence="1">Functions by promoting the formation of the first peptide bond.</text>
</comment>
<comment type="subcellular location">
    <subcellularLocation>
        <location evidence="1">Cytoplasm</location>
    </subcellularLocation>
</comment>
<comment type="similarity">
    <text evidence="1">Belongs to the eIF-5A family.</text>
</comment>
<gene>
    <name type="primary">eIF5A</name>
    <name type="ordered locus">MmarC5_0759</name>
</gene>
<evidence type="ECO:0000255" key="1">
    <source>
        <dbReference type="HAMAP-Rule" id="MF_00085"/>
    </source>
</evidence>
<accession>A4FXY5</accession>